<gene>
    <name evidence="1" type="primary">mtlD</name>
    <name type="ordered locus">YPA_3015</name>
</gene>
<comment type="catalytic activity">
    <reaction evidence="1">
        <text>D-mannitol 1-phosphate + NAD(+) = beta-D-fructose 6-phosphate + NADH + H(+)</text>
        <dbReference type="Rhea" id="RHEA:19661"/>
        <dbReference type="ChEBI" id="CHEBI:15378"/>
        <dbReference type="ChEBI" id="CHEBI:57540"/>
        <dbReference type="ChEBI" id="CHEBI:57634"/>
        <dbReference type="ChEBI" id="CHEBI:57945"/>
        <dbReference type="ChEBI" id="CHEBI:61381"/>
        <dbReference type="EC" id="1.1.1.17"/>
    </reaction>
</comment>
<comment type="similarity">
    <text evidence="1">Belongs to the mannitol dehydrogenase family.</text>
</comment>
<organism>
    <name type="scientific">Yersinia pestis bv. Antiqua (strain Antiqua)</name>
    <dbReference type="NCBI Taxonomy" id="360102"/>
    <lineage>
        <taxon>Bacteria</taxon>
        <taxon>Pseudomonadati</taxon>
        <taxon>Pseudomonadota</taxon>
        <taxon>Gammaproteobacteria</taxon>
        <taxon>Enterobacterales</taxon>
        <taxon>Yersiniaceae</taxon>
        <taxon>Yersinia</taxon>
    </lineage>
</organism>
<protein>
    <recommendedName>
        <fullName evidence="1">Mannitol-1-phosphate 5-dehydrogenase</fullName>
        <ecNumber evidence="1">1.1.1.17</ecNumber>
    </recommendedName>
</protein>
<name>MTLD_YERPA</name>
<keyword id="KW-0520">NAD</keyword>
<keyword id="KW-0560">Oxidoreductase</keyword>
<dbReference type="EC" id="1.1.1.17" evidence="1"/>
<dbReference type="EMBL" id="CP000308">
    <property type="protein sequence ID" value="ABG14977.1"/>
    <property type="molecule type" value="Genomic_DNA"/>
</dbReference>
<dbReference type="RefSeq" id="WP_002209620.1">
    <property type="nucleotide sequence ID" value="NZ_CP009906.1"/>
</dbReference>
<dbReference type="SMR" id="Q1C3J5"/>
<dbReference type="KEGG" id="ypa:YPA_3015"/>
<dbReference type="Proteomes" id="UP000001971">
    <property type="component" value="Chromosome"/>
</dbReference>
<dbReference type="GO" id="GO:0005829">
    <property type="term" value="C:cytosol"/>
    <property type="evidence" value="ECO:0007669"/>
    <property type="project" value="TreeGrafter"/>
</dbReference>
<dbReference type="GO" id="GO:0008926">
    <property type="term" value="F:mannitol-1-phosphate 5-dehydrogenase activity"/>
    <property type="evidence" value="ECO:0007669"/>
    <property type="project" value="UniProtKB-UniRule"/>
</dbReference>
<dbReference type="GO" id="GO:0019592">
    <property type="term" value="P:mannitol catabolic process"/>
    <property type="evidence" value="ECO:0007669"/>
    <property type="project" value="TreeGrafter"/>
</dbReference>
<dbReference type="FunFam" id="1.10.1040.10:FF:000009">
    <property type="entry name" value="Mannitol-1-phosphate 5-dehydrogenase"/>
    <property type="match status" value="1"/>
</dbReference>
<dbReference type="FunFam" id="3.40.50.720:FF:000075">
    <property type="entry name" value="Mannitol-1-phosphate 5-dehydrogenase"/>
    <property type="match status" value="1"/>
</dbReference>
<dbReference type="Gene3D" id="1.10.1040.10">
    <property type="entry name" value="N-(1-d-carboxylethyl)-l-norvaline Dehydrogenase, domain 2"/>
    <property type="match status" value="1"/>
</dbReference>
<dbReference type="Gene3D" id="3.40.50.720">
    <property type="entry name" value="NAD(P)-binding Rossmann-like Domain"/>
    <property type="match status" value="1"/>
</dbReference>
<dbReference type="HAMAP" id="MF_00196">
    <property type="entry name" value="Mannitol_dehydrog"/>
    <property type="match status" value="1"/>
</dbReference>
<dbReference type="InterPro" id="IPR008927">
    <property type="entry name" value="6-PGluconate_DH-like_C_sf"/>
</dbReference>
<dbReference type="InterPro" id="IPR013328">
    <property type="entry name" value="6PGD_dom2"/>
</dbReference>
<dbReference type="InterPro" id="IPR023028">
    <property type="entry name" value="Mannitol_1_phos_5_DH"/>
</dbReference>
<dbReference type="InterPro" id="IPR000669">
    <property type="entry name" value="Mannitol_DH"/>
</dbReference>
<dbReference type="InterPro" id="IPR013118">
    <property type="entry name" value="Mannitol_DH_C"/>
</dbReference>
<dbReference type="InterPro" id="IPR023027">
    <property type="entry name" value="Mannitol_DH_CS"/>
</dbReference>
<dbReference type="InterPro" id="IPR013131">
    <property type="entry name" value="Mannitol_DH_N"/>
</dbReference>
<dbReference type="InterPro" id="IPR036291">
    <property type="entry name" value="NAD(P)-bd_dom_sf"/>
</dbReference>
<dbReference type="NCBIfam" id="NF002646">
    <property type="entry name" value="PRK02318.1-2"/>
    <property type="match status" value="1"/>
</dbReference>
<dbReference type="NCBIfam" id="NF002647">
    <property type="entry name" value="PRK02318.1-3"/>
    <property type="match status" value="1"/>
</dbReference>
<dbReference type="NCBIfam" id="NF002650">
    <property type="entry name" value="PRK02318.2-2"/>
    <property type="match status" value="1"/>
</dbReference>
<dbReference type="NCBIfam" id="NF002652">
    <property type="entry name" value="PRK02318.2-5"/>
    <property type="match status" value="1"/>
</dbReference>
<dbReference type="PANTHER" id="PTHR30524:SF0">
    <property type="entry name" value="ALTRONATE OXIDOREDUCTASE-RELATED"/>
    <property type="match status" value="1"/>
</dbReference>
<dbReference type="PANTHER" id="PTHR30524">
    <property type="entry name" value="MANNITOL-1-PHOSPHATE 5-DEHYDROGENASE"/>
    <property type="match status" value="1"/>
</dbReference>
<dbReference type="Pfam" id="PF01232">
    <property type="entry name" value="Mannitol_dh"/>
    <property type="match status" value="1"/>
</dbReference>
<dbReference type="Pfam" id="PF08125">
    <property type="entry name" value="Mannitol_dh_C"/>
    <property type="match status" value="1"/>
</dbReference>
<dbReference type="PRINTS" id="PR00084">
    <property type="entry name" value="MTLDHDRGNASE"/>
</dbReference>
<dbReference type="SUPFAM" id="SSF48179">
    <property type="entry name" value="6-phosphogluconate dehydrogenase C-terminal domain-like"/>
    <property type="match status" value="1"/>
</dbReference>
<dbReference type="SUPFAM" id="SSF51735">
    <property type="entry name" value="NAD(P)-binding Rossmann-fold domains"/>
    <property type="match status" value="1"/>
</dbReference>
<dbReference type="PROSITE" id="PS00974">
    <property type="entry name" value="MANNITOL_DHGENASE"/>
    <property type="match status" value="1"/>
</dbReference>
<feature type="chain" id="PRO_1000011821" description="Mannitol-1-phosphate 5-dehydrogenase">
    <location>
        <begin position="1"/>
        <end position="387"/>
    </location>
</feature>
<feature type="binding site" evidence="1">
    <location>
        <begin position="3"/>
        <end position="14"/>
    </location>
    <ligand>
        <name>NAD(+)</name>
        <dbReference type="ChEBI" id="CHEBI:57540"/>
    </ligand>
</feature>
<evidence type="ECO:0000255" key="1">
    <source>
        <dbReference type="HAMAP-Rule" id="MF_00196"/>
    </source>
</evidence>
<sequence>MKALHFGAGNIGRGFIGKLLADAGAQLTFADVNQPLLDELNKRKRYQVNVVGEQARVEEVKNVSAVNSGSPEVVALIAEADIVTTAVGPQILARIAATVAQGLITRHQQGNTRPLNIIACENMVRGTSQLKQHVFAALSEDEQIWVEQHVGFVDSAVDRIVPPSEAGSTDILAVTVETFSEWIVDGTQFKGQPPEIVGMELTDNLMAFVERKLFTLNTGHAITAYLGQLAGHQTIRDAILDPAVRQTVKGAMEESGAVLIKRYAFDPQKHAAYINKILSRFENPYLHDDVERVGRQPLRKLSAGDRLIKPLLGTLEYQLPHDSLVTGIAAAMSYRSEQDPQAQELVTLLAQLGPKAALAQISGLPADSEVVEQAVSVYNAMQQKLAH</sequence>
<reference key="1">
    <citation type="journal article" date="2006" name="J. Bacteriol.">
        <title>Complete genome sequence of Yersinia pestis strains Antiqua and Nepal516: evidence of gene reduction in an emerging pathogen.</title>
        <authorList>
            <person name="Chain P.S.G."/>
            <person name="Hu P."/>
            <person name="Malfatti S.A."/>
            <person name="Radnedge L."/>
            <person name="Larimer F."/>
            <person name="Vergez L.M."/>
            <person name="Worsham P."/>
            <person name="Chu M.C."/>
            <person name="Andersen G.L."/>
        </authorList>
    </citation>
    <scope>NUCLEOTIDE SEQUENCE [LARGE SCALE GENOMIC DNA]</scope>
    <source>
        <strain>Antiqua</strain>
    </source>
</reference>
<accession>Q1C3J5</accession>
<proteinExistence type="inferred from homology"/>